<comment type="function">
    <text evidence="1">Associates with the EF-Tu.GDP complex and induces the exchange of GDP to GTP. It remains bound to the aminoacyl-tRNA.EF-Tu.GTP complex up to the GTP hydrolysis stage on the ribosome.</text>
</comment>
<comment type="subcellular location">
    <subcellularLocation>
        <location evidence="1">Cytoplasm</location>
    </subcellularLocation>
</comment>
<comment type="similarity">
    <text evidence="1">Belongs to the EF-Ts family.</text>
</comment>
<gene>
    <name evidence="1" type="primary">tsf</name>
    <name type="ordered locus">BMA10247_1327</name>
</gene>
<dbReference type="EMBL" id="CP000548">
    <property type="protein sequence ID" value="ABO06535.1"/>
    <property type="molecule type" value="Genomic_DNA"/>
</dbReference>
<dbReference type="RefSeq" id="WP_004197087.1">
    <property type="nucleotide sequence ID" value="NZ_CP007802.1"/>
</dbReference>
<dbReference type="SMR" id="A3MKU2"/>
<dbReference type="GeneID" id="93060699"/>
<dbReference type="KEGG" id="bmaz:BM44_1799"/>
<dbReference type="KEGG" id="bmn:BMA10247_1327"/>
<dbReference type="PATRIC" id="fig|320389.8.peg.2013"/>
<dbReference type="GO" id="GO:0005737">
    <property type="term" value="C:cytoplasm"/>
    <property type="evidence" value="ECO:0007669"/>
    <property type="project" value="UniProtKB-SubCell"/>
</dbReference>
<dbReference type="GO" id="GO:0003746">
    <property type="term" value="F:translation elongation factor activity"/>
    <property type="evidence" value="ECO:0007669"/>
    <property type="project" value="UniProtKB-UniRule"/>
</dbReference>
<dbReference type="CDD" id="cd14275">
    <property type="entry name" value="UBA_EF-Ts"/>
    <property type="match status" value="1"/>
</dbReference>
<dbReference type="FunFam" id="1.10.286.20:FF:000001">
    <property type="entry name" value="Elongation factor Ts"/>
    <property type="match status" value="1"/>
</dbReference>
<dbReference type="FunFam" id="1.10.8.10:FF:000001">
    <property type="entry name" value="Elongation factor Ts"/>
    <property type="match status" value="1"/>
</dbReference>
<dbReference type="Gene3D" id="1.10.286.20">
    <property type="match status" value="1"/>
</dbReference>
<dbReference type="Gene3D" id="1.10.8.10">
    <property type="entry name" value="DNA helicase RuvA subunit, C-terminal domain"/>
    <property type="match status" value="1"/>
</dbReference>
<dbReference type="Gene3D" id="3.30.479.20">
    <property type="entry name" value="Elongation factor Ts, dimerisation domain"/>
    <property type="match status" value="2"/>
</dbReference>
<dbReference type="HAMAP" id="MF_00050">
    <property type="entry name" value="EF_Ts"/>
    <property type="match status" value="1"/>
</dbReference>
<dbReference type="InterPro" id="IPR036402">
    <property type="entry name" value="EF-Ts_dimer_sf"/>
</dbReference>
<dbReference type="InterPro" id="IPR001816">
    <property type="entry name" value="Transl_elong_EFTs/EF1B"/>
</dbReference>
<dbReference type="InterPro" id="IPR014039">
    <property type="entry name" value="Transl_elong_EFTs/EF1B_dimer"/>
</dbReference>
<dbReference type="InterPro" id="IPR018101">
    <property type="entry name" value="Transl_elong_Ts_CS"/>
</dbReference>
<dbReference type="InterPro" id="IPR009060">
    <property type="entry name" value="UBA-like_sf"/>
</dbReference>
<dbReference type="NCBIfam" id="TIGR00116">
    <property type="entry name" value="tsf"/>
    <property type="match status" value="1"/>
</dbReference>
<dbReference type="PANTHER" id="PTHR11741">
    <property type="entry name" value="ELONGATION FACTOR TS"/>
    <property type="match status" value="1"/>
</dbReference>
<dbReference type="PANTHER" id="PTHR11741:SF0">
    <property type="entry name" value="ELONGATION FACTOR TS, MITOCHONDRIAL"/>
    <property type="match status" value="1"/>
</dbReference>
<dbReference type="Pfam" id="PF00889">
    <property type="entry name" value="EF_TS"/>
    <property type="match status" value="1"/>
</dbReference>
<dbReference type="SUPFAM" id="SSF54713">
    <property type="entry name" value="Elongation factor Ts (EF-Ts), dimerisation domain"/>
    <property type="match status" value="2"/>
</dbReference>
<dbReference type="SUPFAM" id="SSF46934">
    <property type="entry name" value="UBA-like"/>
    <property type="match status" value="1"/>
</dbReference>
<dbReference type="PROSITE" id="PS01127">
    <property type="entry name" value="EF_TS_2"/>
    <property type="match status" value="1"/>
</dbReference>
<evidence type="ECO:0000255" key="1">
    <source>
        <dbReference type="HAMAP-Rule" id="MF_00050"/>
    </source>
</evidence>
<proteinExistence type="inferred from homology"/>
<reference key="1">
    <citation type="journal article" date="2010" name="Genome Biol. Evol.">
        <title>Continuing evolution of Burkholderia mallei through genome reduction and large-scale rearrangements.</title>
        <authorList>
            <person name="Losada L."/>
            <person name="Ronning C.M."/>
            <person name="DeShazer D."/>
            <person name="Woods D."/>
            <person name="Fedorova N."/>
            <person name="Kim H.S."/>
            <person name="Shabalina S.A."/>
            <person name="Pearson T.R."/>
            <person name="Brinkac L."/>
            <person name="Tan P."/>
            <person name="Nandi T."/>
            <person name="Crabtree J."/>
            <person name="Badger J."/>
            <person name="Beckstrom-Sternberg S."/>
            <person name="Saqib M."/>
            <person name="Schutzer S.E."/>
            <person name="Keim P."/>
            <person name="Nierman W.C."/>
        </authorList>
    </citation>
    <scope>NUCLEOTIDE SEQUENCE [LARGE SCALE GENOMIC DNA]</scope>
    <source>
        <strain>NCTC 10247</strain>
    </source>
</reference>
<organism>
    <name type="scientific">Burkholderia mallei (strain NCTC 10247)</name>
    <dbReference type="NCBI Taxonomy" id="320389"/>
    <lineage>
        <taxon>Bacteria</taxon>
        <taxon>Pseudomonadati</taxon>
        <taxon>Pseudomonadota</taxon>
        <taxon>Betaproteobacteria</taxon>
        <taxon>Burkholderiales</taxon>
        <taxon>Burkholderiaceae</taxon>
        <taxon>Burkholderia</taxon>
        <taxon>pseudomallei group</taxon>
    </lineage>
</organism>
<name>EFTS_BURM7</name>
<feature type="chain" id="PRO_1000006064" description="Elongation factor Ts">
    <location>
        <begin position="1"/>
        <end position="293"/>
    </location>
</feature>
<feature type="region of interest" description="Involved in Mg(2+) ion dislocation from EF-Tu" evidence="1">
    <location>
        <begin position="80"/>
        <end position="83"/>
    </location>
</feature>
<protein>
    <recommendedName>
        <fullName evidence="1">Elongation factor Ts</fullName>
        <shortName evidence="1">EF-Ts</shortName>
    </recommendedName>
</protein>
<accession>A3MKU2</accession>
<sequence length="293" mass="31193">MAAITASMVAELRAKTDAPMMECKKALTEADGDMAKAEELLRVKLGNKASKAASRVTAEGVVASFVGANAGALVELNCETDFVAKNDDFNAFAKTVAELVATQNPADVAALSALPLDGKTVDEVRLALVGKIGENISIRRFVRFETSNKLATYLHGSRIGVIVEYTGAQEQVGKDVAMHVAAMKPVSLSADEVPADLIEKERRVAEQKAAESGKPAEIVAKMVDGSVQKFLKEVSLLNQPFVKNDKQTIEQMLKAADAAVQKFALFVVGEGIEKRQDDFAAEVAAQVAAAKQQ</sequence>
<keyword id="KW-0963">Cytoplasm</keyword>
<keyword id="KW-0251">Elongation factor</keyword>
<keyword id="KW-0648">Protein biosynthesis</keyword>